<keyword id="KW-0963">Cytoplasm</keyword>
<keyword id="KW-0378">Hydrolase</keyword>
<keyword id="KW-0546">Nucleotide metabolism</keyword>
<comment type="function">
    <text evidence="1">Nucleoside triphosphate pyrophosphatase that hydrolyzes dTTP and UTP. May have a dual role in cell division arrest and in preventing the incorporation of modified nucleotides into cellular nucleic acids.</text>
</comment>
<comment type="catalytic activity">
    <reaction evidence="1">
        <text>dTTP + H2O = dTMP + diphosphate + H(+)</text>
        <dbReference type="Rhea" id="RHEA:28534"/>
        <dbReference type="ChEBI" id="CHEBI:15377"/>
        <dbReference type="ChEBI" id="CHEBI:15378"/>
        <dbReference type="ChEBI" id="CHEBI:33019"/>
        <dbReference type="ChEBI" id="CHEBI:37568"/>
        <dbReference type="ChEBI" id="CHEBI:63528"/>
        <dbReference type="EC" id="3.6.1.9"/>
    </reaction>
</comment>
<comment type="catalytic activity">
    <reaction evidence="1">
        <text>UTP + H2O = UMP + diphosphate + H(+)</text>
        <dbReference type="Rhea" id="RHEA:29395"/>
        <dbReference type="ChEBI" id="CHEBI:15377"/>
        <dbReference type="ChEBI" id="CHEBI:15378"/>
        <dbReference type="ChEBI" id="CHEBI:33019"/>
        <dbReference type="ChEBI" id="CHEBI:46398"/>
        <dbReference type="ChEBI" id="CHEBI:57865"/>
        <dbReference type="EC" id="3.6.1.9"/>
    </reaction>
</comment>
<comment type="cofactor">
    <cofactor evidence="1">
        <name>a divalent metal cation</name>
        <dbReference type="ChEBI" id="CHEBI:60240"/>
    </cofactor>
</comment>
<comment type="subcellular location">
    <subcellularLocation>
        <location evidence="1">Cytoplasm</location>
    </subcellularLocation>
</comment>
<comment type="similarity">
    <text evidence="1">Belongs to the Maf family. YhdE subfamily.</text>
</comment>
<proteinExistence type="inferred from homology"/>
<reference key="1">
    <citation type="submission" date="2008-10" db="EMBL/GenBank/DDBJ databases">
        <title>Genome sequence of Clostridium botulinum A2 Kyoto.</title>
        <authorList>
            <person name="Shrivastava S."/>
            <person name="Brinkac L.M."/>
            <person name="Brown J.L."/>
            <person name="Bruce D."/>
            <person name="Detter C.C."/>
            <person name="Johnson E.A."/>
            <person name="Munk C.A."/>
            <person name="Smith L.A."/>
            <person name="Smith T.J."/>
            <person name="Sutton G."/>
            <person name="Brettin T.S."/>
        </authorList>
    </citation>
    <scope>NUCLEOTIDE SEQUENCE [LARGE SCALE GENOMIC DNA]</scope>
    <source>
        <strain>Kyoto / Type A2</strain>
    </source>
</reference>
<sequence>MKNIILASASERRQELLKRILEDFQIIVSDFDESSIPFKDNISSYVMNLAEGKARSVSKKIMDQDNNLVIGCDTLVAFNNKILGKPKDKKDAFEMLQALSGNEHEVYSGLAILDVKSNKIITDFVCTKVKFSKLTSLQIEKYVNTGDPMDKAGAYGIQGKAGVFVENINGCYYNVVGLPLNKLNSMLMEMGVNL</sequence>
<organism>
    <name type="scientific">Clostridium botulinum (strain Kyoto / Type A2)</name>
    <dbReference type="NCBI Taxonomy" id="536232"/>
    <lineage>
        <taxon>Bacteria</taxon>
        <taxon>Bacillati</taxon>
        <taxon>Bacillota</taxon>
        <taxon>Clostridia</taxon>
        <taxon>Eubacteriales</taxon>
        <taxon>Clostridiaceae</taxon>
        <taxon>Clostridium</taxon>
    </lineage>
</organism>
<feature type="chain" id="PRO_1000146284" description="dTTP/UTP pyrophosphatase">
    <location>
        <begin position="1"/>
        <end position="194"/>
    </location>
</feature>
<feature type="active site" description="Proton acceptor" evidence="1">
    <location>
        <position position="73"/>
    </location>
</feature>
<feature type="site" description="Important for substrate specificity" evidence="1">
    <location>
        <position position="12"/>
    </location>
</feature>
<feature type="site" description="Important for substrate specificity" evidence="1">
    <location>
        <position position="74"/>
    </location>
</feature>
<feature type="site" description="Important for substrate specificity" evidence="1">
    <location>
        <position position="158"/>
    </location>
</feature>
<evidence type="ECO:0000255" key="1">
    <source>
        <dbReference type="HAMAP-Rule" id="MF_00528"/>
    </source>
</evidence>
<accession>C1FVY3</accession>
<name>NTPPA_CLOBJ</name>
<gene>
    <name type="ordered locus">CLM_3400</name>
</gene>
<dbReference type="EC" id="3.6.1.9" evidence="1"/>
<dbReference type="EMBL" id="CP001581">
    <property type="protein sequence ID" value="ACO86492.1"/>
    <property type="molecule type" value="Genomic_DNA"/>
</dbReference>
<dbReference type="RefSeq" id="WP_012705348.1">
    <property type="nucleotide sequence ID" value="NC_012563.1"/>
</dbReference>
<dbReference type="SMR" id="C1FVY3"/>
<dbReference type="KEGG" id="cby:CLM_3400"/>
<dbReference type="eggNOG" id="COG0424">
    <property type="taxonomic scope" value="Bacteria"/>
</dbReference>
<dbReference type="HOGENOM" id="CLU_040416_0_0_9"/>
<dbReference type="Proteomes" id="UP000001374">
    <property type="component" value="Chromosome"/>
</dbReference>
<dbReference type="GO" id="GO:0005737">
    <property type="term" value="C:cytoplasm"/>
    <property type="evidence" value="ECO:0007669"/>
    <property type="project" value="UniProtKB-SubCell"/>
</dbReference>
<dbReference type="GO" id="GO:0036218">
    <property type="term" value="F:dTTP diphosphatase activity"/>
    <property type="evidence" value="ECO:0007669"/>
    <property type="project" value="RHEA"/>
</dbReference>
<dbReference type="GO" id="GO:0036221">
    <property type="term" value="F:UTP diphosphatase activity"/>
    <property type="evidence" value="ECO:0007669"/>
    <property type="project" value="RHEA"/>
</dbReference>
<dbReference type="GO" id="GO:0009117">
    <property type="term" value="P:nucleotide metabolic process"/>
    <property type="evidence" value="ECO:0007669"/>
    <property type="project" value="UniProtKB-KW"/>
</dbReference>
<dbReference type="CDD" id="cd00555">
    <property type="entry name" value="Maf"/>
    <property type="match status" value="1"/>
</dbReference>
<dbReference type="FunFam" id="3.90.950.10:FF:000016">
    <property type="entry name" value="dTTP/UTP pyrophosphatase"/>
    <property type="match status" value="1"/>
</dbReference>
<dbReference type="Gene3D" id="3.90.950.10">
    <property type="match status" value="1"/>
</dbReference>
<dbReference type="HAMAP" id="MF_00528">
    <property type="entry name" value="Maf"/>
    <property type="match status" value="1"/>
</dbReference>
<dbReference type="InterPro" id="IPR029001">
    <property type="entry name" value="ITPase-like_fam"/>
</dbReference>
<dbReference type="InterPro" id="IPR003697">
    <property type="entry name" value="Maf-like"/>
</dbReference>
<dbReference type="NCBIfam" id="TIGR00172">
    <property type="entry name" value="maf"/>
    <property type="match status" value="1"/>
</dbReference>
<dbReference type="NCBIfam" id="NF000867">
    <property type="entry name" value="PRK00078.1"/>
    <property type="match status" value="1"/>
</dbReference>
<dbReference type="PANTHER" id="PTHR43213">
    <property type="entry name" value="BIFUNCTIONAL DTTP/UTP PYROPHOSPHATASE/METHYLTRANSFERASE PROTEIN-RELATED"/>
    <property type="match status" value="1"/>
</dbReference>
<dbReference type="PANTHER" id="PTHR43213:SF5">
    <property type="entry name" value="BIFUNCTIONAL DTTP_UTP PYROPHOSPHATASE_METHYLTRANSFERASE PROTEIN-RELATED"/>
    <property type="match status" value="1"/>
</dbReference>
<dbReference type="Pfam" id="PF02545">
    <property type="entry name" value="Maf"/>
    <property type="match status" value="1"/>
</dbReference>
<dbReference type="PIRSF" id="PIRSF006305">
    <property type="entry name" value="Maf"/>
    <property type="match status" value="1"/>
</dbReference>
<dbReference type="SUPFAM" id="SSF52972">
    <property type="entry name" value="ITPase-like"/>
    <property type="match status" value="1"/>
</dbReference>
<protein>
    <recommendedName>
        <fullName evidence="1">dTTP/UTP pyrophosphatase</fullName>
        <shortName evidence="1">dTTPase/UTPase</shortName>
        <ecNumber evidence="1">3.6.1.9</ecNumber>
    </recommendedName>
    <alternativeName>
        <fullName evidence="1">Nucleoside triphosphate pyrophosphatase</fullName>
    </alternativeName>
    <alternativeName>
        <fullName evidence="1">Nucleotide pyrophosphatase</fullName>
        <shortName evidence="1">Nucleotide PPase</shortName>
    </alternativeName>
</protein>